<organism>
    <name type="scientific">Arabidopsis thaliana</name>
    <name type="common">Mouse-ear cress</name>
    <dbReference type="NCBI Taxonomy" id="3702"/>
    <lineage>
        <taxon>Eukaryota</taxon>
        <taxon>Viridiplantae</taxon>
        <taxon>Streptophyta</taxon>
        <taxon>Embryophyta</taxon>
        <taxon>Tracheophyta</taxon>
        <taxon>Spermatophyta</taxon>
        <taxon>Magnoliopsida</taxon>
        <taxon>eudicotyledons</taxon>
        <taxon>Gunneridae</taxon>
        <taxon>Pentapetalae</taxon>
        <taxon>rosids</taxon>
        <taxon>malvids</taxon>
        <taxon>Brassicales</taxon>
        <taxon>Brassicaceae</taxon>
        <taxon>Camelineae</taxon>
        <taxon>Arabidopsis</taxon>
    </lineage>
</organism>
<keyword id="KW-0025">Alternative splicing</keyword>
<keyword id="KW-0067">ATP-binding</keyword>
<keyword id="KW-0436">Ligase</keyword>
<keyword id="KW-0496">Mitochondrion</keyword>
<keyword id="KW-0547">Nucleotide-binding</keyword>
<keyword id="KW-1185">Reference proteome</keyword>
<keyword id="KW-0809">Transit peptide</keyword>
<dbReference type="EC" id="6.3.3.2"/>
<dbReference type="EMBL" id="AF516365">
    <property type="protein sequence ID" value="AAM90960.1"/>
    <property type="molecule type" value="mRNA"/>
</dbReference>
<dbReference type="EMBL" id="AL391711">
    <property type="protein sequence ID" value="CAC05433.1"/>
    <property type="status" value="ALT_SEQ"/>
    <property type="molecule type" value="Genomic_DNA"/>
</dbReference>
<dbReference type="EMBL" id="CP002688">
    <property type="protein sequence ID" value="AED91844.1"/>
    <property type="molecule type" value="Genomic_DNA"/>
</dbReference>
<dbReference type="EMBL" id="CP002688">
    <property type="protein sequence ID" value="AED91845.1"/>
    <property type="molecule type" value="Genomic_DNA"/>
</dbReference>
<dbReference type="EMBL" id="BX830290">
    <property type="status" value="NOT_ANNOTATED_CDS"/>
    <property type="molecule type" value="mRNA"/>
</dbReference>
<dbReference type="EMBL" id="BT024502">
    <property type="protein sequence ID" value="ABD19683.1"/>
    <property type="molecule type" value="mRNA"/>
</dbReference>
<dbReference type="EMBL" id="AY084396">
    <property type="protein sequence ID" value="AAM60972.1"/>
    <property type="molecule type" value="mRNA"/>
</dbReference>
<dbReference type="EMBL" id="BT003924">
    <property type="protein sequence ID" value="AAO41971.1"/>
    <property type="molecule type" value="mRNA"/>
</dbReference>
<dbReference type="RefSeq" id="NP_001031873.1">
    <molecule id="Q8L539-2"/>
    <property type="nucleotide sequence ID" value="NM_001036796.2"/>
</dbReference>
<dbReference type="RefSeq" id="NP_568284.1">
    <molecule id="Q8L539-1"/>
    <property type="nucleotide sequence ID" value="NM_121308.2"/>
</dbReference>
<dbReference type="SMR" id="Q8L539"/>
<dbReference type="FunCoup" id="Q8L539">
    <property type="interactions" value="1638"/>
</dbReference>
<dbReference type="STRING" id="3702.Q8L539"/>
<dbReference type="iPTMnet" id="Q8L539"/>
<dbReference type="PaxDb" id="3702-AT5G13050.1"/>
<dbReference type="ProteomicsDB" id="243267">
    <molecule id="Q8L539-1"/>
</dbReference>
<dbReference type="EnsemblPlants" id="AT5G13050.1">
    <molecule id="Q8L539-1"/>
    <property type="protein sequence ID" value="AT5G13050.1"/>
    <property type="gene ID" value="AT5G13050"/>
</dbReference>
<dbReference type="EnsemblPlants" id="AT5G13050.2">
    <molecule id="Q8L539-2"/>
    <property type="protein sequence ID" value="AT5G13050.2"/>
    <property type="gene ID" value="AT5G13050"/>
</dbReference>
<dbReference type="GeneID" id="831144"/>
<dbReference type="Gramene" id="AT5G13050.1">
    <molecule id="Q8L539-1"/>
    <property type="protein sequence ID" value="AT5G13050.1"/>
    <property type="gene ID" value="AT5G13050"/>
</dbReference>
<dbReference type="Gramene" id="AT5G13050.2">
    <molecule id="Q8L539-2"/>
    <property type="protein sequence ID" value="AT5G13050.2"/>
    <property type="gene ID" value="AT5G13050"/>
</dbReference>
<dbReference type="KEGG" id="ath:AT5G13050"/>
<dbReference type="Araport" id="AT5G13050"/>
<dbReference type="TAIR" id="AT5G13050">
    <property type="gene designation" value="5-FCL"/>
</dbReference>
<dbReference type="eggNOG" id="KOG3093">
    <property type="taxonomic scope" value="Eukaryota"/>
</dbReference>
<dbReference type="HOGENOM" id="CLU_066245_2_0_1"/>
<dbReference type="InParanoid" id="Q8L539"/>
<dbReference type="OMA" id="DKWGIPT"/>
<dbReference type="PhylomeDB" id="Q8L539"/>
<dbReference type="BioCyc" id="ARA:AT5G13050-MONOMER"/>
<dbReference type="BRENDA" id="6.3.3.2">
    <property type="organism ID" value="399"/>
</dbReference>
<dbReference type="SABIO-RK" id="Q8L539"/>
<dbReference type="PRO" id="PR:Q8L539"/>
<dbReference type="Proteomes" id="UP000006548">
    <property type="component" value="Chromosome 5"/>
</dbReference>
<dbReference type="ExpressionAtlas" id="Q8L539">
    <property type="expression patterns" value="baseline and differential"/>
</dbReference>
<dbReference type="GO" id="GO:0005739">
    <property type="term" value="C:mitochondrion"/>
    <property type="evidence" value="ECO:0007669"/>
    <property type="project" value="UniProtKB-SubCell"/>
</dbReference>
<dbReference type="GO" id="GO:0030272">
    <property type="term" value="F:5-formyltetrahydrofolate cyclo-ligase activity"/>
    <property type="evidence" value="ECO:0000314"/>
    <property type="project" value="TAIR"/>
</dbReference>
<dbReference type="GO" id="GO:0005524">
    <property type="term" value="F:ATP binding"/>
    <property type="evidence" value="ECO:0007669"/>
    <property type="project" value="UniProtKB-KW"/>
</dbReference>
<dbReference type="GO" id="GO:0006952">
    <property type="term" value="P:defense response"/>
    <property type="evidence" value="ECO:0000270"/>
    <property type="project" value="TAIR"/>
</dbReference>
<dbReference type="GO" id="GO:0046653">
    <property type="term" value="P:tetrahydrofolate metabolic process"/>
    <property type="evidence" value="ECO:0000315"/>
    <property type="project" value="TAIR"/>
</dbReference>
<dbReference type="FunFam" id="3.40.50.10420:FF:000003">
    <property type="entry name" value="5-formyltetrahydrofolate cyclo-ligase"/>
    <property type="match status" value="1"/>
</dbReference>
<dbReference type="Gene3D" id="3.40.50.10420">
    <property type="entry name" value="NagB/RpiA/CoA transferase-like"/>
    <property type="match status" value="1"/>
</dbReference>
<dbReference type="InterPro" id="IPR002698">
    <property type="entry name" value="FTHF_cligase"/>
</dbReference>
<dbReference type="InterPro" id="IPR024185">
    <property type="entry name" value="FTHF_cligase-like_sf"/>
</dbReference>
<dbReference type="InterPro" id="IPR037171">
    <property type="entry name" value="NagB/RpiA_transferase-like"/>
</dbReference>
<dbReference type="NCBIfam" id="TIGR02727">
    <property type="entry name" value="MTHFS_bact"/>
    <property type="match status" value="1"/>
</dbReference>
<dbReference type="PANTHER" id="PTHR23407:SF1">
    <property type="entry name" value="5-FORMYLTETRAHYDROFOLATE CYCLO-LIGASE"/>
    <property type="match status" value="1"/>
</dbReference>
<dbReference type="PANTHER" id="PTHR23407">
    <property type="entry name" value="ATPASE INHIBITOR/5-FORMYLTETRAHYDROFOLATE CYCLO-LIGASE"/>
    <property type="match status" value="1"/>
</dbReference>
<dbReference type="Pfam" id="PF01812">
    <property type="entry name" value="5-FTHF_cyc-lig"/>
    <property type="match status" value="1"/>
</dbReference>
<dbReference type="SUPFAM" id="SSF100950">
    <property type="entry name" value="NagB/RpiA/CoA transferase-like"/>
    <property type="match status" value="1"/>
</dbReference>
<proteinExistence type="evidence at protein level"/>
<gene>
    <name type="primary">5FCL</name>
    <name type="ordered locus">At5g13050</name>
    <name type="ORF">T19L5.10</name>
</gene>
<name>5FCL_ARATH</name>
<feature type="transit peptide" description="Mitochondrion" evidence="2">
    <location>
        <begin position="1"/>
        <end position="48"/>
    </location>
</feature>
<feature type="chain" id="PRO_0000428719" description="5-formyltetrahydrofolate cyclo-ligase, mitochondrial">
    <location>
        <begin position="49"/>
        <end position="277"/>
    </location>
</feature>
<feature type="binding site" evidence="1">
    <location>
        <begin position="60"/>
        <end position="64"/>
    </location>
    <ligand>
        <name>ATP</name>
        <dbReference type="ChEBI" id="CHEBI:30616"/>
    </ligand>
</feature>
<feature type="binding site" evidence="1">
    <location>
        <position position="113"/>
    </location>
    <ligand>
        <name>substrate</name>
    </ligand>
</feature>
<feature type="binding site" evidence="1">
    <location>
        <begin position="206"/>
        <end position="213"/>
    </location>
    <ligand>
        <name>ATP</name>
        <dbReference type="ChEBI" id="CHEBI:30616"/>
    </ligand>
</feature>
<feature type="binding site" evidence="1">
    <location>
        <begin position="207"/>
        <end position="211"/>
    </location>
    <ligand>
        <name>substrate</name>
    </ligand>
</feature>
<feature type="binding site" evidence="1">
    <location>
        <position position="254"/>
    </location>
    <ligand>
        <name>ATP</name>
        <dbReference type="ChEBI" id="CHEBI:30616"/>
    </ligand>
</feature>
<feature type="splice variant" id="VSP_054249" description="In isoform 2." evidence="5">
    <original>GGYYDT</original>
    <variation>ATTTLS</variation>
    <location>
        <begin position="209"/>
        <end position="214"/>
    </location>
</feature>
<feature type="splice variant" id="VSP_054250" description="In isoform 2." evidence="5">
    <location>
        <begin position="215"/>
        <end position="277"/>
    </location>
</feature>
<protein>
    <recommendedName>
        <fullName>5-formyltetrahydrofolate cyclo-ligase, mitochondrial</fullName>
        <shortName>5-FCL</shortName>
        <ecNumber>6.3.3.2</ecNumber>
    </recommendedName>
</protein>
<evidence type="ECO:0000250" key="1"/>
<evidence type="ECO:0000255" key="2"/>
<evidence type="ECO:0000269" key="3">
    <source>
    </source>
</evidence>
<evidence type="ECO:0000269" key="4">
    <source>
    </source>
</evidence>
<evidence type="ECO:0000303" key="5">
    <source>
    </source>
</evidence>
<evidence type="ECO:0000305" key="6"/>
<evidence type="ECO:0000305" key="7">
    <source>
    </source>
</evidence>
<sequence>MIGARVFCITTTALRRSPIFFFPKIPTRPVFRLSPATRPIVAMSTTSKNQEELDSIFKQKRVVRSTVRKSLKAMDPSLRTQQDEAIQKTVLEAPWFKSCKGLCAYISCKSLNEVDTSKILSEILQHPDSNTQKKLYVPWVEDKNSNMRMLHISHMEDLVANSMNILEPAPVDAQGNDREDVLQADEPIDLFILPGLAFDRCGRRLGRGGGYYDTFLKRYQDRAKEKGWRYPLMVALSYSPQILEDGSIPVTPNDVLIDALVTPSGVVPITPRATESM</sequence>
<reference key="1">
    <citation type="journal article" date="2002" name="J. Biol. Chem.">
        <title>Cloning and characterization of mitochondrial 5-formyltetrahydrofolate cycloligase from higher plants.</title>
        <authorList>
            <person name="Roje S."/>
            <person name="Janave M.T."/>
            <person name="Ziemak M.J."/>
            <person name="Hanson A.D."/>
        </authorList>
    </citation>
    <scope>NUCLEOTIDE SEQUENCE [MRNA] (ISOFORM 1)</scope>
    <scope>FUNCTION</scope>
    <scope>CATALYTIC ACTIVITY</scope>
    <scope>BIOPHYSICOCHEMICAL PROPERTIES</scope>
    <scope>SUBUNIT</scope>
    <scope>SUBCELLULAR LOCATION</scope>
</reference>
<reference key="2">
    <citation type="journal article" date="2000" name="Nature">
        <title>Sequence and analysis of chromosome 5 of the plant Arabidopsis thaliana.</title>
        <authorList>
            <person name="Tabata S."/>
            <person name="Kaneko T."/>
            <person name="Nakamura Y."/>
            <person name="Kotani H."/>
            <person name="Kato T."/>
            <person name="Asamizu E."/>
            <person name="Miyajima N."/>
            <person name="Sasamoto S."/>
            <person name="Kimura T."/>
            <person name="Hosouchi T."/>
            <person name="Kawashima K."/>
            <person name="Kohara M."/>
            <person name="Matsumoto M."/>
            <person name="Matsuno A."/>
            <person name="Muraki A."/>
            <person name="Nakayama S."/>
            <person name="Nakazaki N."/>
            <person name="Naruo K."/>
            <person name="Okumura S."/>
            <person name="Shinpo S."/>
            <person name="Takeuchi C."/>
            <person name="Wada T."/>
            <person name="Watanabe A."/>
            <person name="Yamada M."/>
            <person name="Yasuda M."/>
            <person name="Sato S."/>
            <person name="de la Bastide M."/>
            <person name="Huang E."/>
            <person name="Spiegel L."/>
            <person name="Gnoj L."/>
            <person name="O'Shaughnessy A."/>
            <person name="Preston R."/>
            <person name="Habermann K."/>
            <person name="Murray J."/>
            <person name="Johnson D."/>
            <person name="Rohlfing T."/>
            <person name="Nelson J."/>
            <person name="Stoneking T."/>
            <person name="Pepin K."/>
            <person name="Spieth J."/>
            <person name="Sekhon M."/>
            <person name="Armstrong J."/>
            <person name="Becker M."/>
            <person name="Belter E."/>
            <person name="Cordum H."/>
            <person name="Cordes M."/>
            <person name="Courtney L."/>
            <person name="Courtney W."/>
            <person name="Dante M."/>
            <person name="Du H."/>
            <person name="Edwards J."/>
            <person name="Fryman J."/>
            <person name="Haakensen B."/>
            <person name="Lamar E."/>
            <person name="Latreille P."/>
            <person name="Leonard S."/>
            <person name="Meyer R."/>
            <person name="Mulvaney E."/>
            <person name="Ozersky P."/>
            <person name="Riley A."/>
            <person name="Strowmatt C."/>
            <person name="Wagner-McPherson C."/>
            <person name="Wollam A."/>
            <person name="Yoakum M."/>
            <person name="Bell M."/>
            <person name="Dedhia N."/>
            <person name="Parnell L."/>
            <person name="Shah R."/>
            <person name="Rodriguez M."/>
            <person name="Hoon See L."/>
            <person name="Vil D."/>
            <person name="Baker J."/>
            <person name="Kirchoff K."/>
            <person name="Toth K."/>
            <person name="King L."/>
            <person name="Bahret A."/>
            <person name="Miller B."/>
            <person name="Marra M.A."/>
            <person name="Martienssen R."/>
            <person name="McCombie W.R."/>
            <person name="Wilson R.K."/>
            <person name="Murphy G."/>
            <person name="Bancroft I."/>
            <person name="Volckaert G."/>
            <person name="Wambutt R."/>
            <person name="Duesterhoeft A."/>
            <person name="Stiekema W."/>
            <person name="Pohl T."/>
            <person name="Entian K.-D."/>
            <person name="Terryn N."/>
            <person name="Hartley N."/>
            <person name="Bent E."/>
            <person name="Johnson S."/>
            <person name="Langham S.-A."/>
            <person name="McCullagh B."/>
            <person name="Robben J."/>
            <person name="Grymonprez B."/>
            <person name="Zimmermann W."/>
            <person name="Ramsperger U."/>
            <person name="Wedler H."/>
            <person name="Balke K."/>
            <person name="Wedler E."/>
            <person name="Peters S."/>
            <person name="van Staveren M."/>
            <person name="Dirkse W."/>
            <person name="Mooijman P."/>
            <person name="Klein Lankhorst R."/>
            <person name="Weitzenegger T."/>
            <person name="Bothe G."/>
            <person name="Rose M."/>
            <person name="Hauf J."/>
            <person name="Berneiser S."/>
            <person name="Hempel S."/>
            <person name="Feldpausch M."/>
            <person name="Lamberth S."/>
            <person name="Villarroel R."/>
            <person name="Gielen J."/>
            <person name="Ardiles W."/>
            <person name="Bents O."/>
            <person name="Lemcke K."/>
            <person name="Kolesov G."/>
            <person name="Mayer K.F.X."/>
            <person name="Rudd S."/>
            <person name="Schoof H."/>
            <person name="Schueller C."/>
            <person name="Zaccaria P."/>
            <person name="Mewes H.-W."/>
            <person name="Bevan M."/>
            <person name="Fransz P.F."/>
        </authorList>
    </citation>
    <scope>NUCLEOTIDE SEQUENCE [LARGE SCALE GENOMIC DNA]</scope>
    <source>
        <strain>cv. Columbia</strain>
    </source>
</reference>
<reference key="3">
    <citation type="journal article" date="2017" name="Plant J.">
        <title>Araport11: a complete reannotation of the Arabidopsis thaliana reference genome.</title>
        <authorList>
            <person name="Cheng C.Y."/>
            <person name="Krishnakumar V."/>
            <person name="Chan A.P."/>
            <person name="Thibaud-Nissen F."/>
            <person name="Schobel S."/>
            <person name="Town C.D."/>
        </authorList>
    </citation>
    <scope>GENOME REANNOTATION</scope>
    <source>
        <strain>cv. Columbia</strain>
    </source>
</reference>
<reference key="4">
    <citation type="submission" date="2006-02" db="EMBL/GenBank/DDBJ databases">
        <title>Arabidopsis ORF clones.</title>
        <authorList>
            <person name="Shinn P."/>
            <person name="Chen H."/>
            <person name="Kim C.J."/>
            <person name="Ecker J.R."/>
        </authorList>
    </citation>
    <scope>NUCLEOTIDE SEQUENCE [LARGE SCALE MRNA] (ISOFORM 1)</scope>
    <source>
        <strain>cv. Columbia</strain>
    </source>
</reference>
<reference key="5">
    <citation type="submission" date="2002-03" db="EMBL/GenBank/DDBJ databases">
        <title>Full-length cDNA from Arabidopsis thaliana.</title>
        <authorList>
            <person name="Brover V.V."/>
            <person name="Troukhan M.E."/>
            <person name="Alexandrov N.A."/>
            <person name="Lu Y.-P."/>
            <person name="Flavell R.B."/>
            <person name="Feldmann K.A."/>
        </authorList>
    </citation>
    <scope>NUCLEOTIDE SEQUENCE [LARGE SCALE MRNA] (ISOFORM 1)</scope>
</reference>
<reference key="6">
    <citation type="journal article" date="2004" name="Genome Res.">
        <title>Whole genome sequence comparisons and 'full-length' cDNA sequences: a combined approach to evaluate and improve Arabidopsis genome annotation.</title>
        <authorList>
            <person name="Castelli V."/>
            <person name="Aury J.-M."/>
            <person name="Jaillon O."/>
            <person name="Wincker P."/>
            <person name="Clepet C."/>
            <person name="Menard M."/>
            <person name="Cruaud C."/>
            <person name="Quetier F."/>
            <person name="Scarpelli C."/>
            <person name="Schaechter V."/>
            <person name="Temple G."/>
            <person name="Caboche M."/>
            <person name="Weissenbach J."/>
            <person name="Salanoubat M."/>
        </authorList>
    </citation>
    <scope>NUCLEOTIDE SEQUENCE [LARGE SCALE MRNA] OF 25-277 (ISOFORM 2)</scope>
    <source>
        <strain>cv. Columbia</strain>
    </source>
</reference>
<reference key="7">
    <citation type="journal article" date="2003" name="Science">
        <title>Empirical analysis of transcriptional activity in the Arabidopsis genome.</title>
        <authorList>
            <person name="Yamada K."/>
            <person name="Lim J."/>
            <person name="Dale J.M."/>
            <person name="Chen H."/>
            <person name="Shinn P."/>
            <person name="Palm C.J."/>
            <person name="Southwick A.M."/>
            <person name="Wu H.C."/>
            <person name="Kim C.J."/>
            <person name="Nguyen M."/>
            <person name="Pham P.K."/>
            <person name="Cheuk R.F."/>
            <person name="Karlin-Newmann G."/>
            <person name="Liu S.X."/>
            <person name="Lam B."/>
            <person name="Sakano H."/>
            <person name="Wu T."/>
            <person name="Yu G."/>
            <person name="Miranda M."/>
            <person name="Quach H.L."/>
            <person name="Tripp M."/>
            <person name="Chang C.H."/>
            <person name="Lee J.M."/>
            <person name="Toriumi M.J."/>
            <person name="Chan M.M."/>
            <person name="Tang C.C."/>
            <person name="Onodera C.S."/>
            <person name="Deng J.M."/>
            <person name="Akiyama K."/>
            <person name="Ansari Y."/>
            <person name="Arakawa T."/>
            <person name="Banh J."/>
            <person name="Banno F."/>
            <person name="Bowser L."/>
            <person name="Brooks S.Y."/>
            <person name="Carninci P."/>
            <person name="Chao Q."/>
            <person name="Choy N."/>
            <person name="Enju A."/>
            <person name="Goldsmith A.D."/>
            <person name="Gurjal M."/>
            <person name="Hansen N.F."/>
            <person name="Hayashizaki Y."/>
            <person name="Johnson-Hopson C."/>
            <person name="Hsuan V.W."/>
            <person name="Iida K."/>
            <person name="Karnes M."/>
            <person name="Khan S."/>
            <person name="Koesema E."/>
            <person name="Ishida J."/>
            <person name="Jiang P.X."/>
            <person name="Jones T."/>
            <person name="Kawai J."/>
            <person name="Kamiya A."/>
            <person name="Meyers C."/>
            <person name="Nakajima M."/>
            <person name="Narusaka M."/>
            <person name="Seki M."/>
            <person name="Sakurai T."/>
            <person name="Satou M."/>
            <person name="Tamse R."/>
            <person name="Vaysberg M."/>
            <person name="Wallender E.K."/>
            <person name="Wong C."/>
            <person name="Yamamura Y."/>
            <person name="Yuan S."/>
            <person name="Shinozaki K."/>
            <person name="Davis R.W."/>
            <person name="Theologis A."/>
            <person name="Ecker J.R."/>
        </authorList>
    </citation>
    <scope>NUCLEOTIDE SEQUENCE [LARGE SCALE MRNA] OF 33-277 (ISOFORM 1)</scope>
    <source>
        <strain>cv. Columbia</strain>
    </source>
</reference>
<reference key="8">
    <citation type="journal article" date="2005" name="J. Biol. Chem.">
        <title>5-Formyltetrahydrofolate is an inhibitory but well tolerated metabolite in Arabidopsis leaves.</title>
        <authorList>
            <person name="Goyer A."/>
            <person name="Collakova E."/>
            <person name="Diaz de la Garza R."/>
            <person name="Quinlivan E.P."/>
            <person name="Williamson J."/>
            <person name="Gregory J.F."/>
            <person name="Shachar-Hill Y."/>
            <person name="Hanson A.D."/>
        </authorList>
    </citation>
    <scope>FUNCTION</scope>
    <scope>DISRUPTION PHENOTYPE</scope>
</reference>
<accession>Q8L539</accession>
<accession>F4K2F3</accession>
<accession>Q84WD9</accession>
<accession>Q9FYA5</accession>
<comment type="function">
    <text evidence="3 4">Contributes to tetrahydrofolate metabolism and photorespiration through the regulation of serine hydroxymethyltransferase. Prefers the pentalutamyl to the monoglutamyl form of 5-formyltetrahydrofolate.</text>
</comment>
<comment type="catalytic activity">
    <reaction evidence="3">
        <text>(6S)-5-formyl-5,6,7,8-tetrahydrofolate + ATP = (6R)-5,10-methenyltetrahydrofolate + ADP + phosphate</text>
        <dbReference type="Rhea" id="RHEA:10488"/>
        <dbReference type="ChEBI" id="CHEBI:30616"/>
        <dbReference type="ChEBI" id="CHEBI:43474"/>
        <dbReference type="ChEBI" id="CHEBI:57455"/>
        <dbReference type="ChEBI" id="CHEBI:57457"/>
        <dbReference type="ChEBI" id="CHEBI:456216"/>
        <dbReference type="EC" id="6.3.3.2"/>
    </reaction>
</comment>
<comment type="biophysicochemical properties">
    <kinetics>
        <KM evidence="3">5.8 uM for 5-formyltetrahydrofolate</KM>
        <KM evidence="3">35.2 uM for ATP</KM>
        <Vmax evidence="3">11.5 umol/min/mg enzyme toward 5-formyltetrahydrofolate</Vmax>
    </kinetics>
    <phDependence>
        <text evidence="3">Optimum pH is 8.5.</text>
    </phDependence>
</comment>
<comment type="subunit">
    <text evidence="7">Monomer.</text>
</comment>
<comment type="subcellular location">
    <subcellularLocation>
        <location evidence="7">Mitochondrion</location>
    </subcellularLocation>
</comment>
<comment type="alternative products">
    <event type="alternative splicing"/>
    <isoform>
        <id>Q8L539-1</id>
        <name>1</name>
        <sequence type="displayed"/>
    </isoform>
    <isoform>
        <id>Q8L539-2</id>
        <name>2</name>
        <sequence type="described" ref="VSP_054249 VSP_054250"/>
    </isoform>
</comment>
<comment type="disruption phenotype">
    <text evidence="4">Reduced growth rate and delayed flowering.</text>
</comment>
<comment type="similarity">
    <text evidence="6">Belongs to the 5-formyltetrahydrofolate cyclo-ligase family.</text>
</comment>
<comment type="sequence caution" evidence="6">
    <conflict type="erroneous gene model prediction">
        <sequence resource="EMBL-CDS" id="CAC05433"/>
    </conflict>
</comment>